<evidence type="ECO:0000250" key="1"/>
<evidence type="ECO:0000255" key="2">
    <source>
        <dbReference type="HAMAP-Rule" id="MF_01109"/>
    </source>
</evidence>
<accession>Q6GHR7</accession>
<proteinExistence type="inferred from homology"/>
<name>OTC_STAAR</name>
<sequence>MKNLRNRSFLTLLDFSRQEVEFLLTLSEDLKRAKYIGTEKPMLKNKNIALLFEKDSTRTRCAFEVAAHDQGANVTYLGPTGSQMGKKETTKDTARVLGGMYDGIEYRGFSQRTVETLAEYSGVPVWNGLTDEDHPTQVLADFLTAKEVLKKDYADINFTYVGDGRNNVANALMQGAAIMGMNFHLVCPKELNPTDELLNRCKNIAAENGGNILITDDIDQGVKGSDVIYTDVWVSMGEPDEVWKERLELLKPYQVNKEMMDKTGNPNVIFEHCLPSFHNADTKIGQQIFEKYGIREMEVTDEVFESKASVVFQEAENRMHTIKAVMVATLGEF</sequence>
<feature type="chain" id="PRO_0000113015" description="Ornithine carbamoyltransferase">
    <location>
        <begin position="1"/>
        <end position="333"/>
    </location>
</feature>
<feature type="binding site" evidence="2">
    <location>
        <begin position="56"/>
        <end position="59"/>
    </location>
    <ligand>
        <name>carbamoyl phosphate</name>
        <dbReference type="ChEBI" id="CHEBI:58228"/>
    </ligand>
</feature>
<feature type="binding site" evidence="2">
    <location>
        <position position="83"/>
    </location>
    <ligand>
        <name>carbamoyl phosphate</name>
        <dbReference type="ChEBI" id="CHEBI:58228"/>
    </ligand>
</feature>
<feature type="binding site" evidence="2">
    <location>
        <position position="107"/>
    </location>
    <ligand>
        <name>carbamoyl phosphate</name>
        <dbReference type="ChEBI" id="CHEBI:58228"/>
    </ligand>
</feature>
<feature type="binding site" evidence="2">
    <location>
        <begin position="134"/>
        <end position="137"/>
    </location>
    <ligand>
        <name>carbamoyl phosphate</name>
        <dbReference type="ChEBI" id="CHEBI:58228"/>
    </ligand>
</feature>
<feature type="binding site" evidence="2">
    <location>
        <position position="167"/>
    </location>
    <ligand>
        <name>L-ornithine</name>
        <dbReference type="ChEBI" id="CHEBI:46911"/>
    </ligand>
</feature>
<feature type="binding site" evidence="2">
    <location>
        <position position="231"/>
    </location>
    <ligand>
        <name>L-ornithine</name>
        <dbReference type="ChEBI" id="CHEBI:46911"/>
    </ligand>
</feature>
<feature type="binding site" evidence="2">
    <location>
        <begin position="235"/>
        <end position="236"/>
    </location>
    <ligand>
        <name>L-ornithine</name>
        <dbReference type="ChEBI" id="CHEBI:46911"/>
    </ligand>
</feature>
<feature type="binding site" evidence="2">
    <location>
        <begin position="273"/>
        <end position="274"/>
    </location>
    <ligand>
        <name>carbamoyl phosphate</name>
        <dbReference type="ChEBI" id="CHEBI:58228"/>
    </ligand>
</feature>
<feature type="binding site" evidence="2">
    <location>
        <position position="318"/>
    </location>
    <ligand>
        <name>carbamoyl phosphate</name>
        <dbReference type="ChEBI" id="CHEBI:58228"/>
    </ligand>
</feature>
<protein>
    <recommendedName>
        <fullName evidence="2">Ornithine carbamoyltransferase</fullName>
        <shortName evidence="2">OTCase</shortName>
        <ecNumber evidence="2">2.1.3.3</ecNumber>
    </recommendedName>
</protein>
<gene>
    <name evidence="2" type="primary">argF</name>
    <name type="ordered locus">SAR1142</name>
</gene>
<reference key="1">
    <citation type="journal article" date="2004" name="Proc. Natl. Acad. Sci. U.S.A.">
        <title>Complete genomes of two clinical Staphylococcus aureus strains: evidence for the rapid evolution of virulence and drug resistance.</title>
        <authorList>
            <person name="Holden M.T.G."/>
            <person name="Feil E.J."/>
            <person name="Lindsay J.A."/>
            <person name="Peacock S.J."/>
            <person name="Day N.P.J."/>
            <person name="Enright M.C."/>
            <person name="Foster T.J."/>
            <person name="Moore C.E."/>
            <person name="Hurst L."/>
            <person name="Atkin R."/>
            <person name="Barron A."/>
            <person name="Bason N."/>
            <person name="Bentley S.D."/>
            <person name="Chillingworth C."/>
            <person name="Chillingworth T."/>
            <person name="Churcher C."/>
            <person name="Clark L."/>
            <person name="Corton C."/>
            <person name="Cronin A."/>
            <person name="Doggett J."/>
            <person name="Dowd L."/>
            <person name="Feltwell T."/>
            <person name="Hance Z."/>
            <person name="Harris B."/>
            <person name="Hauser H."/>
            <person name="Holroyd S."/>
            <person name="Jagels K."/>
            <person name="James K.D."/>
            <person name="Lennard N."/>
            <person name="Line A."/>
            <person name="Mayes R."/>
            <person name="Moule S."/>
            <person name="Mungall K."/>
            <person name="Ormond D."/>
            <person name="Quail M.A."/>
            <person name="Rabbinowitsch E."/>
            <person name="Rutherford K.M."/>
            <person name="Sanders M."/>
            <person name="Sharp S."/>
            <person name="Simmonds M."/>
            <person name="Stevens K."/>
            <person name="Whitehead S."/>
            <person name="Barrell B.G."/>
            <person name="Spratt B.G."/>
            <person name="Parkhill J."/>
        </authorList>
    </citation>
    <scope>NUCLEOTIDE SEQUENCE [LARGE SCALE GENOMIC DNA]</scope>
    <source>
        <strain>MRSA252</strain>
    </source>
</reference>
<organism>
    <name type="scientific">Staphylococcus aureus (strain MRSA252)</name>
    <dbReference type="NCBI Taxonomy" id="282458"/>
    <lineage>
        <taxon>Bacteria</taxon>
        <taxon>Bacillati</taxon>
        <taxon>Bacillota</taxon>
        <taxon>Bacilli</taxon>
        <taxon>Bacillales</taxon>
        <taxon>Staphylococcaceae</taxon>
        <taxon>Staphylococcus</taxon>
    </lineage>
</organism>
<dbReference type="EC" id="2.1.3.3" evidence="2"/>
<dbReference type="EMBL" id="BX571856">
    <property type="protein sequence ID" value="CAG40146.1"/>
    <property type="molecule type" value="Genomic_DNA"/>
</dbReference>
<dbReference type="RefSeq" id="WP_000793607.1">
    <property type="nucleotide sequence ID" value="NC_002952.2"/>
</dbReference>
<dbReference type="SMR" id="Q6GHR7"/>
<dbReference type="KEGG" id="sar:SAR1142"/>
<dbReference type="HOGENOM" id="CLU_043846_3_1_9"/>
<dbReference type="UniPathway" id="UPA00068">
    <property type="reaction ID" value="UER00112"/>
</dbReference>
<dbReference type="Proteomes" id="UP000000596">
    <property type="component" value="Chromosome"/>
</dbReference>
<dbReference type="GO" id="GO:0005737">
    <property type="term" value="C:cytoplasm"/>
    <property type="evidence" value="ECO:0007669"/>
    <property type="project" value="UniProtKB-SubCell"/>
</dbReference>
<dbReference type="GO" id="GO:0016597">
    <property type="term" value="F:amino acid binding"/>
    <property type="evidence" value="ECO:0007669"/>
    <property type="project" value="InterPro"/>
</dbReference>
<dbReference type="GO" id="GO:0004585">
    <property type="term" value="F:ornithine carbamoyltransferase activity"/>
    <property type="evidence" value="ECO:0007669"/>
    <property type="project" value="UniProtKB-UniRule"/>
</dbReference>
<dbReference type="GO" id="GO:0042450">
    <property type="term" value="P:arginine biosynthetic process via ornithine"/>
    <property type="evidence" value="ECO:0007669"/>
    <property type="project" value="TreeGrafter"/>
</dbReference>
<dbReference type="GO" id="GO:0019240">
    <property type="term" value="P:citrulline biosynthetic process"/>
    <property type="evidence" value="ECO:0007669"/>
    <property type="project" value="TreeGrafter"/>
</dbReference>
<dbReference type="GO" id="GO:0006526">
    <property type="term" value="P:L-arginine biosynthetic process"/>
    <property type="evidence" value="ECO:0007669"/>
    <property type="project" value="UniProtKB-UniRule"/>
</dbReference>
<dbReference type="FunFam" id="3.40.50.1370:FF:000004">
    <property type="entry name" value="Ornithine carbamoyltransferase"/>
    <property type="match status" value="1"/>
</dbReference>
<dbReference type="Gene3D" id="3.40.50.1370">
    <property type="entry name" value="Aspartate/ornithine carbamoyltransferase"/>
    <property type="match status" value="2"/>
</dbReference>
<dbReference type="HAMAP" id="MF_01109">
    <property type="entry name" value="OTCase"/>
    <property type="match status" value="1"/>
</dbReference>
<dbReference type="InterPro" id="IPR006132">
    <property type="entry name" value="Asp/Orn_carbamoyltranf_P-bd"/>
</dbReference>
<dbReference type="InterPro" id="IPR006130">
    <property type="entry name" value="Asp/Orn_carbamoylTrfase"/>
</dbReference>
<dbReference type="InterPro" id="IPR036901">
    <property type="entry name" value="Asp/Orn_carbamoylTrfase_sf"/>
</dbReference>
<dbReference type="InterPro" id="IPR006131">
    <property type="entry name" value="Asp_carbamoyltransf_Asp/Orn-bd"/>
</dbReference>
<dbReference type="InterPro" id="IPR002292">
    <property type="entry name" value="Orn/put_carbamltrans"/>
</dbReference>
<dbReference type="InterPro" id="IPR024904">
    <property type="entry name" value="OTCase_ArgI"/>
</dbReference>
<dbReference type="NCBIfam" id="TIGR00658">
    <property type="entry name" value="orni_carb_tr"/>
    <property type="match status" value="1"/>
</dbReference>
<dbReference type="NCBIfam" id="NF001986">
    <property type="entry name" value="PRK00779.1"/>
    <property type="match status" value="1"/>
</dbReference>
<dbReference type="NCBIfam" id="NF003286">
    <property type="entry name" value="PRK04284.1"/>
    <property type="match status" value="1"/>
</dbReference>
<dbReference type="PANTHER" id="PTHR45753:SF2">
    <property type="entry name" value="ORNITHINE CARBAMOYLTRANSFERASE"/>
    <property type="match status" value="1"/>
</dbReference>
<dbReference type="PANTHER" id="PTHR45753">
    <property type="entry name" value="ORNITHINE CARBAMOYLTRANSFERASE, MITOCHONDRIAL"/>
    <property type="match status" value="1"/>
</dbReference>
<dbReference type="Pfam" id="PF00185">
    <property type="entry name" value="OTCace"/>
    <property type="match status" value="1"/>
</dbReference>
<dbReference type="Pfam" id="PF02729">
    <property type="entry name" value="OTCace_N"/>
    <property type="match status" value="1"/>
</dbReference>
<dbReference type="PRINTS" id="PR00100">
    <property type="entry name" value="AOTCASE"/>
</dbReference>
<dbReference type="PRINTS" id="PR00102">
    <property type="entry name" value="OTCASE"/>
</dbReference>
<dbReference type="SUPFAM" id="SSF53671">
    <property type="entry name" value="Aspartate/ornithine carbamoyltransferase"/>
    <property type="match status" value="1"/>
</dbReference>
<dbReference type="PROSITE" id="PS00097">
    <property type="entry name" value="CARBAMOYLTRANSFERASE"/>
    <property type="match status" value="1"/>
</dbReference>
<comment type="function">
    <text evidence="1">Reversibly catalyzes the transfer of the carbamoyl group from carbamoyl phosphate (CP) to the N(epsilon) atom of ornithine (ORN) to produce L-citrulline.</text>
</comment>
<comment type="catalytic activity">
    <reaction evidence="2">
        <text>carbamoyl phosphate + L-ornithine = L-citrulline + phosphate + H(+)</text>
        <dbReference type="Rhea" id="RHEA:19513"/>
        <dbReference type="ChEBI" id="CHEBI:15378"/>
        <dbReference type="ChEBI" id="CHEBI:43474"/>
        <dbReference type="ChEBI" id="CHEBI:46911"/>
        <dbReference type="ChEBI" id="CHEBI:57743"/>
        <dbReference type="ChEBI" id="CHEBI:58228"/>
        <dbReference type="EC" id="2.1.3.3"/>
    </reaction>
</comment>
<comment type="pathway">
    <text evidence="2">Amino-acid biosynthesis; L-arginine biosynthesis; L-arginine from L-ornithine and carbamoyl phosphate: step 1/3.</text>
</comment>
<comment type="subcellular location">
    <subcellularLocation>
        <location evidence="2">Cytoplasm</location>
    </subcellularLocation>
</comment>
<comment type="similarity">
    <text evidence="2">Belongs to the aspartate/ornithine carbamoyltransferase superfamily. OTCase family.</text>
</comment>
<keyword id="KW-0028">Amino-acid biosynthesis</keyword>
<keyword id="KW-0055">Arginine biosynthesis</keyword>
<keyword id="KW-0963">Cytoplasm</keyword>
<keyword id="KW-0808">Transferase</keyword>